<proteinExistence type="evidence at transcript level"/>
<feature type="initiator methionine" description="Removed" evidence="1">
    <location>
        <position position="1"/>
    </location>
</feature>
<feature type="chain" id="PRO_0000216051" description="Chalcone synthase 3">
    <location>
        <begin position="2"/>
        <end position="395"/>
    </location>
</feature>
<feature type="active site" evidence="2 3">
    <location>
        <position position="169"/>
    </location>
</feature>
<feature type="modified residue" description="N-acetylvaline" evidence="1">
    <location>
        <position position="2"/>
    </location>
</feature>
<accession>P13417</accession>
<dbReference type="EC" id="2.3.1.74"/>
<dbReference type="EMBL" id="X14314">
    <property type="protein sequence ID" value="CAA32495.1"/>
    <property type="molecule type" value="mRNA"/>
</dbReference>
<dbReference type="PIR" id="S06877">
    <property type="entry name" value="SYISC3"/>
</dbReference>
<dbReference type="SMR" id="P13417"/>
<dbReference type="UniPathway" id="UPA00154"/>
<dbReference type="GO" id="GO:0016210">
    <property type="term" value="F:naringenin-chalcone synthase activity"/>
    <property type="evidence" value="ECO:0007669"/>
    <property type="project" value="UniProtKB-EC"/>
</dbReference>
<dbReference type="GO" id="GO:0009813">
    <property type="term" value="P:flavonoid biosynthetic process"/>
    <property type="evidence" value="ECO:0007669"/>
    <property type="project" value="UniProtKB-UniPathway"/>
</dbReference>
<dbReference type="GO" id="GO:0030639">
    <property type="term" value="P:polyketide biosynthetic process"/>
    <property type="evidence" value="ECO:0007669"/>
    <property type="project" value="TreeGrafter"/>
</dbReference>
<dbReference type="CDD" id="cd00831">
    <property type="entry name" value="CHS_like"/>
    <property type="match status" value="1"/>
</dbReference>
<dbReference type="FunFam" id="3.40.47.10:FF:000014">
    <property type="entry name" value="Chalcone synthase 1"/>
    <property type="match status" value="1"/>
</dbReference>
<dbReference type="FunFam" id="3.40.47.10:FF:000025">
    <property type="entry name" value="Chalcone synthase 2"/>
    <property type="match status" value="1"/>
</dbReference>
<dbReference type="Gene3D" id="3.40.47.10">
    <property type="match status" value="2"/>
</dbReference>
<dbReference type="InterPro" id="IPR012328">
    <property type="entry name" value="Chalcone/stilbene_synt_C"/>
</dbReference>
<dbReference type="InterPro" id="IPR001099">
    <property type="entry name" value="Chalcone/stilbene_synt_N"/>
</dbReference>
<dbReference type="InterPro" id="IPR018088">
    <property type="entry name" value="Chalcone/stilbene_synthase_AS"/>
</dbReference>
<dbReference type="InterPro" id="IPR011141">
    <property type="entry name" value="Polyketide_synthase_type-III"/>
</dbReference>
<dbReference type="InterPro" id="IPR016039">
    <property type="entry name" value="Thiolase-like"/>
</dbReference>
<dbReference type="PANTHER" id="PTHR11877:SF14">
    <property type="entry name" value="CHALCONE SYNTHASE"/>
    <property type="match status" value="1"/>
</dbReference>
<dbReference type="PANTHER" id="PTHR11877">
    <property type="entry name" value="HYDROXYMETHYLGLUTARYL-COA SYNTHASE"/>
    <property type="match status" value="1"/>
</dbReference>
<dbReference type="Pfam" id="PF02797">
    <property type="entry name" value="Chal_sti_synt_C"/>
    <property type="match status" value="1"/>
</dbReference>
<dbReference type="Pfam" id="PF00195">
    <property type="entry name" value="Chal_sti_synt_N"/>
    <property type="match status" value="1"/>
</dbReference>
<dbReference type="PIRSF" id="PIRSF000451">
    <property type="entry name" value="PKS_III"/>
    <property type="match status" value="1"/>
</dbReference>
<dbReference type="SUPFAM" id="SSF53901">
    <property type="entry name" value="Thiolase-like"/>
    <property type="match status" value="2"/>
</dbReference>
<dbReference type="PROSITE" id="PS00441">
    <property type="entry name" value="CHALCONE_SYNTH"/>
    <property type="match status" value="1"/>
</dbReference>
<gene>
    <name type="primary">CHS3</name>
</gene>
<protein>
    <recommendedName>
        <fullName>Chalcone synthase 3</fullName>
        <ecNumber>2.3.1.74</ecNumber>
    </recommendedName>
    <alternativeName>
        <fullName>Naringenin-chalcone synthase 3</fullName>
    </alternativeName>
</protein>
<keyword id="KW-0007">Acetylation</keyword>
<keyword id="KW-0012">Acyltransferase</keyword>
<keyword id="KW-0284">Flavonoid biosynthesis</keyword>
<keyword id="KW-0808">Transferase</keyword>
<sequence length="395" mass="43065">MVMGTPSSLDEIRKAQRADGPAGILAIGTANPANHVIQAEYPDYYFRITNSEHMTDLKEKFKRMCDKSTIRKRHMHLTEEFLKDNPNMCAYMAPSLDARQDIVVVEVPKLGKEAAVKAIKEWGQPKSKITHVVFCTTSGVDMPGADYQLTKLLGLRPSVKRLMMYQQGCFAGGTVLRLAKDLAENNRGARVLVVCSEITAVTFRGPSDTHLDSLVGQALFSDGAAAIIVGSDPDTSVGEKPIFEMVSAAQTILPDSDGAIDGHLREVGLTFHLLKDVPGLISKNIEKSLDEAFKPLGISDWNSLFWIAHPGGPAILDDVEKKLGLKAEKMRATRHVLSEYGNMSSACVLFILDEMRRKSKEDGVATTGEGLEWGVLFGFGPGLTVETVVLHSVPV</sequence>
<evidence type="ECO:0000250" key="1">
    <source>
        <dbReference type="UniProtKB" id="P13114"/>
    </source>
</evidence>
<evidence type="ECO:0000255" key="2">
    <source>
        <dbReference type="PROSITE-ProRule" id="PRU10023"/>
    </source>
</evidence>
<evidence type="ECO:0000269" key="3">
    <source>
    </source>
</evidence>
<evidence type="ECO:0000305" key="4"/>
<reference key="1">
    <citation type="journal article" date="1988" name="Plant Mol. Biol.">
        <title>Nucleotide sequences encoding two different chalcone synthases expressed in cotyledons of SAN 9789 treated mustard (Sinapis alba L.).</title>
        <authorList>
            <person name="Ehmann B."/>
            <person name="Schaefer E."/>
        </authorList>
        <dbReference type="AGRICOLA" id="IND91035202"/>
    </citation>
    <scope>NUCLEOTIDE SEQUENCE [MRNA]</scope>
    <source>
        <tissue>Cotyledon</tissue>
    </source>
</reference>
<reference key="2">
    <citation type="journal article" date="1991" name="J. Biol. Chem.">
        <title>The role of cysteines in polyketide synthases. Site-directed mutagenesis of resveratrol and chalcone synthases, two key enzymes in different plant-specific pathways.</title>
        <authorList>
            <person name="Lanz T."/>
            <person name="Tropf S."/>
            <person name="Marner F.-J."/>
            <person name="Schroeder J."/>
            <person name="Schroeder G."/>
        </authorList>
    </citation>
    <scope>ACTIVE SITE</scope>
    <scope>MUTAGENESIS</scope>
</reference>
<name>CHS3_SINAL</name>
<organism>
    <name type="scientific">Sinapis alba</name>
    <name type="common">White mustard</name>
    <name type="synonym">Brassica hirta</name>
    <dbReference type="NCBI Taxonomy" id="3728"/>
    <lineage>
        <taxon>Eukaryota</taxon>
        <taxon>Viridiplantae</taxon>
        <taxon>Streptophyta</taxon>
        <taxon>Embryophyta</taxon>
        <taxon>Tracheophyta</taxon>
        <taxon>Spermatophyta</taxon>
        <taxon>Magnoliopsida</taxon>
        <taxon>eudicotyledons</taxon>
        <taxon>Gunneridae</taxon>
        <taxon>Pentapetalae</taxon>
        <taxon>rosids</taxon>
        <taxon>malvids</taxon>
        <taxon>Brassicales</taxon>
        <taxon>Brassicaceae</taxon>
        <taxon>Brassiceae</taxon>
        <taxon>Sinapis</taxon>
    </lineage>
</organism>
<comment type="function">
    <text>The primary product of this enzyme is 4,2',4',6'-tetrahydroxychalcone (also termed naringenin-chalcone or chalcone) which can under specific conditions spontaneously isomerize into naringenin.</text>
</comment>
<comment type="catalytic activity">
    <reaction evidence="2">
        <text>(E)-4-coumaroyl-CoA + 3 malonyl-CoA + 3 H(+) = 2',4,4',6'-tetrahydroxychalcone + 3 CO2 + 4 CoA</text>
        <dbReference type="Rhea" id="RHEA:11128"/>
        <dbReference type="ChEBI" id="CHEBI:15378"/>
        <dbReference type="ChEBI" id="CHEBI:15413"/>
        <dbReference type="ChEBI" id="CHEBI:16526"/>
        <dbReference type="ChEBI" id="CHEBI:57287"/>
        <dbReference type="ChEBI" id="CHEBI:57384"/>
        <dbReference type="ChEBI" id="CHEBI:85008"/>
        <dbReference type="EC" id="2.3.1.74"/>
    </reaction>
</comment>
<comment type="pathway">
    <text>Secondary metabolite biosynthesis; flavonoid biosynthesis.</text>
</comment>
<comment type="similarity">
    <text evidence="4">Belongs to the thiolase-like superfamily. Chalcone/stilbene synthases family.</text>
</comment>